<reference key="1">
    <citation type="journal article" date="2006" name="J. Bacteriol.">
        <title>Complete genome sequence of Yersinia pestis strains Antiqua and Nepal516: evidence of gene reduction in an emerging pathogen.</title>
        <authorList>
            <person name="Chain P.S.G."/>
            <person name="Hu P."/>
            <person name="Malfatti S.A."/>
            <person name="Radnedge L."/>
            <person name="Larimer F."/>
            <person name="Vergez L.M."/>
            <person name="Worsham P."/>
            <person name="Chu M.C."/>
            <person name="Andersen G.L."/>
        </authorList>
    </citation>
    <scope>NUCLEOTIDE SEQUENCE [LARGE SCALE GENOMIC DNA]</scope>
    <source>
        <strain>Antiqua</strain>
    </source>
</reference>
<proteinExistence type="inferred from homology"/>
<protein>
    <recommendedName>
        <fullName evidence="1">sn-glycerol-3-phosphate import ATP-binding protein UgpC</fullName>
        <ecNumber evidence="1">7.6.2.10</ecNumber>
    </recommendedName>
</protein>
<comment type="function">
    <text evidence="1">Part of the ABC transporter complex UgpBAEC involved in sn-glycerol-3-phosphate (G3P) import. Responsible for energy coupling to the transport system.</text>
</comment>
<comment type="catalytic activity">
    <reaction evidence="1">
        <text>sn-glycerol 3-phosphate(out) + ATP + H2O = sn-glycerol 3-phosphate(in) + ADP + phosphate + H(+)</text>
        <dbReference type="Rhea" id="RHEA:21668"/>
        <dbReference type="ChEBI" id="CHEBI:15377"/>
        <dbReference type="ChEBI" id="CHEBI:15378"/>
        <dbReference type="ChEBI" id="CHEBI:30616"/>
        <dbReference type="ChEBI" id="CHEBI:43474"/>
        <dbReference type="ChEBI" id="CHEBI:57597"/>
        <dbReference type="ChEBI" id="CHEBI:456216"/>
        <dbReference type="EC" id="7.6.2.10"/>
    </reaction>
</comment>
<comment type="subunit">
    <text evidence="1">The complex is composed of two ATP-binding proteins (UgpC), two transmembrane proteins (UgpA and UgpE) and a solute-binding protein (UgpB).</text>
</comment>
<comment type="subcellular location">
    <subcellularLocation>
        <location evidence="1">Cell inner membrane</location>
        <topology evidence="1">Peripheral membrane protein</topology>
    </subcellularLocation>
</comment>
<comment type="similarity">
    <text evidence="1">Belongs to the ABC transporter superfamily. sn-glycerol-3-phosphate importer (TC 3.A.1.1.3) family.</text>
</comment>
<gene>
    <name evidence="1" type="primary">ugpC</name>
    <name type="ordered locus">YPA_0231</name>
</gene>
<dbReference type="EC" id="7.6.2.10" evidence="1"/>
<dbReference type="EMBL" id="CP000308">
    <property type="protein sequence ID" value="ABG12200.1"/>
    <property type="molecule type" value="Genomic_DNA"/>
</dbReference>
<dbReference type="RefSeq" id="WP_002211523.1">
    <property type="nucleotide sequence ID" value="NZ_CP009906.1"/>
</dbReference>
<dbReference type="SMR" id="Q1CBH2"/>
<dbReference type="KEGG" id="ypa:YPA_0231"/>
<dbReference type="Proteomes" id="UP000001971">
    <property type="component" value="Chromosome"/>
</dbReference>
<dbReference type="GO" id="GO:0055052">
    <property type="term" value="C:ATP-binding cassette (ABC) transporter complex, substrate-binding subunit-containing"/>
    <property type="evidence" value="ECO:0007669"/>
    <property type="project" value="TreeGrafter"/>
</dbReference>
<dbReference type="GO" id="GO:0015430">
    <property type="term" value="F:ABC-type glycerol-3-phosphate transporter activity"/>
    <property type="evidence" value="ECO:0007669"/>
    <property type="project" value="UniProtKB-EC"/>
</dbReference>
<dbReference type="GO" id="GO:0005524">
    <property type="term" value="F:ATP binding"/>
    <property type="evidence" value="ECO:0007669"/>
    <property type="project" value="UniProtKB-KW"/>
</dbReference>
<dbReference type="GO" id="GO:0016887">
    <property type="term" value="F:ATP hydrolysis activity"/>
    <property type="evidence" value="ECO:0007669"/>
    <property type="project" value="InterPro"/>
</dbReference>
<dbReference type="GO" id="GO:0008643">
    <property type="term" value="P:carbohydrate transport"/>
    <property type="evidence" value="ECO:0007669"/>
    <property type="project" value="InterPro"/>
</dbReference>
<dbReference type="GO" id="GO:0001407">
    <property type="term" value="P:glycerophosphodiester transmembrane transport"/>
    <property type="evidence" value="ECO:0007669"/>
    <property type="project" value="TreeGrafter"/>
</dbReference>
<dbReference type="CDD" id="cd03301">
    <property type="entry name" value="ABC_MalK_N"/>
    <property type="match status" value="1"/>
</dbReference>
<dbReference type="FunFam" id="3.40.50.300:FF:000042">
    <property type="entry name" value="Maltose/maltodextrin ABC transporter, ATP-binding protein"/>
    <property type="match status" value="1"/>
</dbReference>
<dbReference type="FunFam" id="2.40.50.100:FF:000032">
    <property type="entry name" value="sn-glycerol-3-phosphate import ATP-binding protein UgpC"/>
    <property type="match status" value="1"/>
</dbReference>
<dbReference type="Gene3D" id="2.40.50.100">
    <property type="match status" value="1"/>
</dbReference>
<dbReference type="Gene3D" id="2.40.50.140">
    <property type="entry name" value="Nucleic acid-binding proteins"/>
    <property type="match status" value="1"/>
</dbReference>
<dbReference type="Gene3D" id="3.40.50.300">
    <property type="entry name" value="P-loop containing nucleotide triphosphate hydrolases"/>
    <property type="match status" value="1"/>
</dbReference>
<dbReference type="InterPro" id="IPR003593">
    <property type="entry name" value="AAA+_ATPase"/>
</dbReference>
<dbReference type="InterPro" id="IPR003439">
    <property type="entry name" value="ABC_transporter-like_ATP-bd"/>
</dbReference>
<dbReference type="InterPro" id="IPR017871">
    <property type="entry name" value="ABC_transporter-like_CS"/>
</dbReference>
<dbReference type="InterPro" id="IPR015855">
    <property type="entry name" value="ABC_transpr_MalK-like"/>
</dbReference>
<dbReference type="InterPro" id="IPR047641">
    <property type="entry name" value="ABC_transpr_MalK/UgpC-like"/>
</dbReference>
<dbReference type="InterPro" id="IPR008995">
    <property type="entry name" value="Mo/tungstate-bd_C_term_dom"/>
</dbReference>
<dbReference type="InterPro" id="IPR012340">
    <property type="entry name" value="NA-bd_OB-fold"/>
</dbReference>
<dbReference type="InterPro" id="IPR040582">
    <property type="entry name" value="OB_MalK-like"/>
</dbReference>
<dbReference type="InterPro" id="IPR027417">
    <property type="entry name" value="P-loop_NTPase"/>
</dbReference>
<dbReference type="NCBIfam" id="NF008653">
    <property type="entry name" value="PRK11650.1"/>
    <property type="match status" value="1"/>
</dbReference>
<dbReference type="PANTHER" id="PTHR43875">
    <property type="entry name" value="MALTODEXTRIN IMPORT ATP-BINDING PROTEIN MSMX"/>
    <property type="match status" value="1"/>
</dbReference>
<dbReference type="PANTHER" id="PTHR43875:SF12">
    <property type="entry name" value="SN-GLYCEROL-3-PHOSPHATE IMPORT ATP-BINDING PROTEIN UGPC"/>
    <property type="match status" value="1"/>
</dbReference>
<dbReference type="Pfam" id="PF00005">
    <property type="entry name" value="ABC_tran"/>
    <property type="match status" value="1"/>
</dbReference>
<dbReference type="Pfam" id="PF17912">
    <property type="entry name" value="OB_MalK"/>
    <property type="match status" value="1"/>
</dbReference>
<dbReference type="SMART" id="SM00382">
    <property type="entry name" value="AAA"/>
    <property type="match status" value="1"/>
</dbReference>
<dbReference type="SUPFAM" id="SSF50331">
    <property type="entry name" value="MOP-like"/>
    <property type="match status" value="1"/>
</dbReference>
<dbReference type="SUPFAM" id="SSF52540">
    <property type="entry name" value="P-loop containing nucleoside triphosphate hydrolases"/>
    <property type="match status" value="1"/>
</dbReference>
<dbReference type="PROSITE" id="PS00211">
    <property type="entry name" value="ABC_TRANSPORTER_1"/>
    <property type="match status" value="1"/>
</dbReference>
<dbReference type="PROSITE" id="PS50893">
    <property type="entry name" value="ABC_TRANSPORTER_2"/>
    <property type="match status" value="1"/>
</dbReference>
<dbReference type="PROSITE" id="PS51315">
    <property type="entry name" value="UGPC"/>
    <property type="match status" value="1"/>
</dbReference>
<accession>Q1CBH2</accession>
<sequence length="357" mass="39529">MACLKLQAVTKSYDGVTPVIKQIDLDVADGEFIVMVGPSGCGKSTLLRMVAGLERTTTGDIYIGDQRVTDLEPKDRGIAMVFQNYVLYPHMNVFDNMAYGLKIRGFGKEQIRQRVDEAARILELQPLLKRKPRELSGGQRQRVAMGRAIVREPAVFLFDEPLSNLDAKLRVQMRLELQQLHRRLKTTSLYVTHDQVEAMTLAQRVIVMNKGVAEQIGTPSEVYKRPASLFVASFIGSPAMNLLDGTVSPDGRTFILSDGLTLPLEIPQPQWGGRRLTLGIRPEHIQQTTSAQGVPMNLLTLELLGADNLAHGLWGGQSIIARLSHEEMPVAGSTLHLYLPPAALHFFDTDSGLRIEP</sequence>
<keyword id="KW-0067">ATP-binding</keyword>
<keyword id="KW-0997">Cell inner membrane</keyword>
<keyword id="KW-1003">Cell membrane</keyword>
<keyword id="KW-0472">Membrane</keyword>
<keyword id="KW-0547">Nucleotide-binding</keyword>
<keyword id="KW-0762">Sugar transport</keyword>
<keyword id="KW-1278">Translocase</keyword>
<keyword id="KW-0813">Transport</keyword>
<feature type="chain" id="PRO_0000289791" description="sn-glycerol-3-phosphate import ATP-binding protein UgpC">
    <location>
        <begin position="1"/>
        <end position="357"/>
    </location>
</feature>
<feature type="domain" description="ABC transporter" evidence="1">
    <location>
        <begin position="4"/>
        <end position="235"/>
    </location>
</feature>
<feature type="binding site" evidence="1">
    <location>
        <begin position="37"/>
        <end position="44"/>
    </location>
    <ligand>
        <name>ATP</name>
        <dbReference type="ChEBI" id="CHEBI:30616"/>
    </ligand>
</feature>
<name>UGPC_YERPA</name>
<organism>
    <name type="scientific">Yersinia pestis bv. Antiqua (strain Antiqua)</name>
    <dbReference type="NCBI Taxonomy" id="360102"/>
    <lineage>
        <taxon>Bacteria</taxon>
        <taxon>Pseudomonadati</taxon>
        <taxon>Pseudomonadota</taxon>
        <taxon>Gammaproteobacteria</taxon>
        <taxon>Enterobacterales</taxon>
        <taxon>Yersiniaceae</taxon>
        <taxon>Yersinia</taxon>
    </lineage>
</organism>
<evidence type="ECO:0000255" key="1">
    <source>
        <dbReference type="HAMAP-Rule" id="MF_01727"/>
    </source>
</evidence>